<comment type="function">
    <text evidence="1">Component of the ERMES/MDM complex, which serves as a molecular tether to connect the endoplasmic reticulum (ER) and mitochondria. Components of this complex are involved in the control of mitochondrial shape and protein biogenesis, and function in nonvesicular lipid trafficking between the ER and mitochondria. The MDM12-MMM1 subcomplex functions in the major beta-barrel assembly pathway that is responsible for biogenesis of all outer membrane beta-barrel proteins, and acts in a late step after the SAM complex. The MDM10-MDM12-MMM1 subcomplex further acts in the TOM40-specific pathway after the action of the MDM12-MMM1 complex. Essential for establishing and maintaining the structure of mitochondria and maintenance of mtDNA nucleoids.</text>
</comment>
<comment type="subunit">
    <text evidence="1">Homodimer. Component of the ER-mitochondria encounter structure (ERMES) or MDM complex, composed of MMM1, MDM10, MDM12 and MDM34. A MMM1 homodimer associates with one molecule of MDM12 on each side in a pairwise head-to-tail manner, and the SMP-LTD domains of MMM1 and MDM12 generate a continuous hydrophobic tunnel for phospholipid trafficking.</text>
</comment>
<comment type="subcellular location">
    <subcellularLocation>
        <location evidence="1">Endoplasmic reticulum membrane</location>
        <topology evidence="1">Single-pass type I membrane protein</topology>
    </subcellularLocation>
    <text evidence="1">The ERMES/MDM complex localizes to a few discrete foci (around 10 per single cell), that represent mitochondria-endoplasmic reticulum junctions. These foci are often found next to mtDNA nucleoids.</text>
</comment>
<comment type="domain">
    <text evidence="1">The SMP-LTD domain is a barrel-like domain that can bind various types of glycerophospholipids in its interior and mediate their transfer between two adjacent bilayers.</text>
</comment>
<comment type="similarity">
    <text evidence="1">Belongs to the MMM1 family.</text>
</comment>
<accession>Q59SI5</accession>
<accession>A0A1D8PL71</accession>
<organism>
    <name type="scientific">Candida albicans (strain SC5314 / ATCC MYA-2876)</name>
    <name type="common">Yeast</name>
    <dbReference type="NCBI Taxonomy" id="237561"/>
    <lineage>
        <taxon>Eukaryota</taxon>
        <taxon>Fungi</taxon>
        <taxon>Dikarya</taxon>
        <taxon>Ascomycota</taxon>
        <taxon>Saccharomycotina</taxon>
        <taxon>Pichiomycetes</taxon>
        <taxon>Debaryomycetaceae</taxon>
        <taxon>Candida/Lodderomyces clade</taxon>
        <taxon>Candida</taxon>
    </lineage>
</organism>
<dbReference type="EMBL" id="CP017626">
    <property type="protein sequence ID" value="AOW28848.1"/>
    <property type="molecule type" value="Genomic_DNA"/>
</dbReference>
<dbReference type="RefSeq" id="XP_712641.2">
    <property type="nucleotide sequence ID" value="XM_707548.2"/>
</dbReference>
<dbReference type="SMR" id="Q59SI5"/>
<dbReference type="FunCoup" id="Q59SI5">
    <property type="interactions" value="87"/>
</dbReference>
<dbReference type="STRING" id="237561.Q59SI5"/>
<dbReference type="EnsemblFungi" id="C4_00560C_A-T">
    <property type="protein sequence ID" value="C4_00560C_A-T-p1"/>
    <property type="gene ID" value="C4_00560C_A"/>
</dbReference>
<dbReference type="GeneID" id="3645744"/>
<dbReference type="KEGG" id="cal:CAALFM_C400560CA"/>
<dbReference type="CGD" id="CAL0000191719">
    <property type="gene designation" value="MMM1"/>
</dbReference>
<dbReference type="VEuPathDB" id="FungiDB:C4_00560C_A"/>
<dbReference type="eggNOG" id="ENOG502QUUW">
    <property type="taxonomic scope" value="Eukaryota"/>
</dbReference>
<dbReference type="HOGENOM" id="CLU_032730_2_0_1"/>
<dbReference type="InParanoid" id="Q59SI5"/>
<dbReference type="OrthoDB" id="5599157at2759"/>
<dbReference type="PRO" id="PR:Q59SI5"/>
<dbReference type="Proteomes" id="UP000000559">
    <property type="component" value="Chromosome 4"/>
</dbReference>
<dbReference type="GO" id="GO:0005783">
    <property type="term" value="C:endoplasmic reticulum"/>
    <property type="evidence" value="ECO:0000318"/>
    <property type="project" value="GO_Central"/>
</dbReference>
<dbReference type="GO" id="GO:0005789">
    <property type="term" value="C:endoplasmic reticulum membrane"/>
    <property type="evidence" value="ECO:0007669"/>
    <property type="project" value="UniProtKB-SubCell"/>
</dbReference>
<dbReference type="GO" id="GO:0032865">
    <property type="term" value="C:ERMES complex"/>
    <property type="evidence" value="ECO:0000318"/>
    <property type="project" value="GO_Central"/>
</dbReference>
<dbReference type="GO" id="GO:0008289">
    <property type="term" value="F:lipid binding"/>
    <property type="evidence" value="ECO:0000318"/>
    <property type="project" value="GO_Central"/>
</dbReference>
<dbReference type="GO" id="GO:0015917">
    <property type="term" value="P:aminophospholipid transport"/>
    <property type="evidence" value="ECO:0000318"/>
    <property type="project" value="GO_Central"/>
</dbReference>
<dbReference type="GO" id="GO:0120009">
    <property type="term" value="P:intermembrane lipid transfer"/>
    <property type="evidence" value="ECO:0007669"/>
    <property type="project" value="GOC"/>
</dbReference>
<dbReference type="GO" id="GO:0000002">
    <property type="term" value="P:mitochondrial genome maintenance"/>
    <property type="evidence" value="ECO:0007669"/>
    <property type="project" value="UniProtKB-UniRule"/>
</dbReference>
<dbReference type="GO" id="GO:1990456">
    <property type="term" value="P:mitochondrion-endoplasmic reticulum membrane tethering"/>
    <property type="evidence" value="ECO:0000318"/>
    <property type="project" value="GO_Central"/>
</dbReference>
<dbReference type="GO" id="GO:0045040">
    <property type="term" value="P:protein insertion into mitochondrial outer membrane"/>
    <property type="evidence" value="ECO:0007669"/>
    <property type="project" value="UniProtKB-UniRule"/>
</dbReference>
<dbReference type="CDD" id="cd21671">
    <property type="entry name" value="SMP_Mmm1"/>
    <property type="match status" value="1"/>
</dbReference>
<dbReference type="HAMAP" id="MF_03103">
    <property type="entry name" value="Mmm1"/>
    <property type="match status" value="1"/>
</dbReference>
<dbReference type="InterPro" id="IPR027537">
    <property type="entry name" value="Mmm1"/>
</dbReference>
<dbReference type="InterPro" id="IPR019411">
    <property type="entry name" value="MMM1_dom"/>
</dbReference>
<dbReference type="InterPro" id="IPR031468">
    <property type="entry name" value="SMP_LBD"/>
</dbReference>
<dbReference type="PANTHER" id="PTHR13466:SF0">
    <property type="entry name" value="SMP-LTD DOMAIN-CONTAINING PROTEIN"/>
    <property type="match status" value="1"/>
</dbReference>
<dbReference type="PANTHER" id="PTHR13466">
    <property type="entry name" value="TEX2 PROTEIN-RELATED"/>
    <property type="match status" value="1"/>
</dbReference>
<dbReference type="Pfam" id="PF10296">
    <property type="entry name" value="MMM1"/>
    <property type="match status" value="1"/>
</dbReference>
<dbReference type="PROSITE" id="PS51847">
    <property type="entry name" value="SMP"/>
    <property type="match status" value="1"/>
</dbReference>
<proteinExistence type="inferred from homology"/>
<feature type="chain" id="PRO_0000384221" description="Maintenance of mitochondrial morphology protein 1">
    <location>
        <begin position="1"/>
        <end position="439"/>
    </location>
</feature>
<feature type="topological domain" description="Lumenal" evidence="1">
    <location>
        <begin position="1"/>
        <end position="76"/>
    </location>
</feature>
<feature type="transmembrane region" description="Helical" evidence="1">
    <location>
        <begin position="77"/>
        <end position="97"/>
    </location>
</feature>
<feature type="topological domain" description="Cytoplasmic" evidence="1">
    <location>
        <begin position="98"/>
        <end position="439"/>
    </location>
</feature>
<feature type="domain" description="SMP-LTD" evidence="1">
    <location>
        <begin position="165"/>
        <end position="395"/>
    </location>
</feature>
<feature type="region of interest" description="Disordered" evidence="2">
    <location>
        <begin position="125"/>
        <end position="145"/>
    </location>
</feature>
<feature type="region of interest" description="Disordered" evidence="2">
    <location>
        <begin position="309"/>
        <end position="336"/>
    </location>
</feature>
<feature type="region of interest" description="Disordered" evidence="2">
    <location>
        <begin position="405"/>
        <end position="425"/>
    </location>
</feature>
<feature type="compositionally biased region" description="Low complexity" evidence="2">
    <location>
        <begin position="315"/>
        <end position="326"/>
    </location>
</feature>
<feature type="compositionally biased region" description="Low complexity" evidence="2">
    <location>
        <begin position="410"/>
        <end position="424"/>
    </location>
</feature>
<reference key="1">
    <citation type="journal article" date="2004" name="Proc. Natl. Acad. Sci. U.S.A.">
        <title>The diploid genome sequence of Candida albicans.</title>
        <authorList>
            <person name="Jones T."/>
            <person name="Federspiel N.A."/>
            <person name="Chibana H."/>
            <person name="Dungan J."/>
            <person name="Kalman S."/>
            <person name="Magee B.B."/>
            <person name="Newport G."/>
            <person name="Thorstenson Y.R."/>
            <person name="Agabian N."/>
            <person name="Magee P.T."/>
            <person name="Davis R.W."/>
            <person name="Scherer S."/>
        </authorList>
    </citation>
    <scope>NUCLEOTIDE SEQUENCE [LARGE SCALE GENOMIC DNA]</scope>
    <source>
        <strain>SC5314 / ATCC MYA-2876</strain>
    </source>
</reference>
<reference key="2">
    <citation type="journal article" date="2007" name="Genome Biol.">
        <title>Assembly of the Candida albicans genome into sixteen supercontigs aligned on the eight chromosomes.</title>
        <authorList>
            <person name="van het Hoog M."/>
            <person name="Rast T.J."/>
            <person name="Martchenko M."/>
            <person name="Grindle S."/>
            <person name="Dignard D."/>
            <person name="Hogues H."/>
            <person name="Cuomo C."/>
            <person name="Berriman M."/>
            <person name="Scherer S."/>
            <person name="Magee B.B."/>
            <person name="Whiteway M."/>
            <person name="Chibana H."/>
            <person name="Nantel A."/>
            <person name="Magee P.T."/>
        </authorList>
    </citation>
    <scope>GENOME REANNOTATION</scope>
    <source>
        <strain>SC5314 / ATCC MYA-2876</strain>
    </source>
</reference>
<reference key="3">
    <citation type="journal article" date="2013" name="Genome Biol.">
        <title>Assembly of a phased diploid Candida albicans genome facilitates allele-specific measurements and provides a simple model for repeat and indel structure.</title>
        <authorList>
            <person name="Muzzey D."/>
            <person name="Schwartz K."/>
            <person name="Weissman J.S."/>
            <person name="Sherlock G."/>
        </authorList>
    </citation>
    <scope>NUCLEOTIDE SEQUENCE [LARGE SCALE GENOMIC DNA]</scope>
    <scope>GENOME REANNOTATION</scope>
    <source>
        <strain>SC5314 / ATCC MYA-2876</strain>
    </source>
</reference>
<protein>
    <recommendedName>
        <fullName evidence="1">Maintenance of mitochondrial morphology protein 1</fullName>
    </recommendedName>
</protein>
<keyword id="KW-0256">Endoplasmic reticulum</keyword>
<keyword id="KW-0445">Lipid transport</keyword>
<keyword id="KW-0446">Lipid-binding</keyword>
<keyword id="KW-0472">Membrane</keyword>
<keyword id="KW-1185">Reference proteome</keyword>
<keyword id="KW-0812">Transmembrane</keyword>
<keyword id="KW-1133">Transmembrane helix</keyword>
<keyword id="KW-0813">Transport</keyword>
<sequence>MSQDLIETTATTTKIVEARELGHQIHDSLLEQLKLQQEELLQQQRDLFFQEQQLQLQQQVTQPVSNNGNTWSFTQGLVIGQVSVIFIIIVFVKFFVFADSSSHIPTKPGLDGATGVIVKRNKNKKHSNGQFANDGENEDDTSLDSNQSKISSILEKTYYDVNNHASESLDWFNVLVAQTISQLRSEALLKDNIYHSLNNFLTNAKLPDFIDTINLTEIDIGDDFPIFSNCRIKYGEDLKRLEAKIDVDLSDTLTLGIATKLLLNQPRPLTAVLPVSLTVSIVRFSGCLTVSLINTKDIDLKNVDKTSNMNGYSKENANGDGASSSNNDEDEDDGGTALMFSFSPDYRLEFIVKSLIGSRAKLQDVPKISSLIENQLRTWFIERCVEPRFQVVRLPSLWPRTKNTREPVTKKTTTTPSTTVNGTSAATITTPGEYVNSNI</sequence>
<name>MMM1_CANAL</name>
<evidence type="ECO:0000255" key="1">
    <source>
        <dbReference type="HAMAP-Rule" id="MF_03103"/>
    </source>
</evidence>
<evidence type="ECO:0000256" key="2">
    <source>
        <dbReference type="SAM" id="MobiDB-lite"/>
    </source>
</evidence>
<gene>
    <name evidence="1" type="primary">MMM1</name>
    <name type="ordered locus">CAALFM_C400560CA</name>
    <name type="ORF">CaO19.11664</name>
    <name type="ORF">CaO19.4187</name>
</gene>